<protein>
    <recommendedName>
        <fullName>Nitrogen regulatory protein P-II</fullName>
    </recommendedName>
    <alternativeName>
        <fullName>PII signal transducing protein</fullName>
    </alternativeName>
</protein>
<dbReference type="EMBL" id="AF017419">
    <property type="protein sequence ID" value="AAC26348.1"/>
    <property type="molecule type" value="Genomic_DNA"/>
</dbReference>
<dbReference type="EMBL" id="CP001037">
    <property type="protein sequence ID" value="ACC82833.1"/>
    <property type="molecule type" value="Genomic_DNA"/>
</dbReference>
<dbReference type="RefSeq" id="WP_012410794.1">
    <property type="nucleotide sequence ID" value="NC_010628.1"/>
</dbReference>
<dbReference type="SMR" id="O30794"/>
<dbReference type="STRING" id="63737.Npun_F4466"/>
<dbReference type="EnsemblBacteria" id="ACC82833">
    <property type="protein sequence ID" value="ACC82833"/>
    <property type="gene ID" value="Npun_F4466"/>
</dbReference>
<dbReference type="KEGG" id="npu:Npun_F4466"/>
<dbReference type="eggNOG" id="COG0347">
    <property type="taxonomic scope" value="Bacteria"/>
</dbReference>
<dbReference type="HOGENOM" id="CLU_082268_0_0_3"/>
<dbReference type="OrthoDB" id="9802729at2"/>
<dbReference type="PhylomeDB" id="O30794"/>
<dbReference type="Proteomes" id="UP000001191">
    <property type="component" value="Chromosome"/>
</dbReference>
<dbReference type="GO" id="GO:0005829">
    <property type="term" value="C:cytosol"/>
    <property type="evidence" value="ECO:0007669"/>
    <property type="project" value="TreeGrafter"/>
</dbReference>
<dbReference type="GO" id="GO:0005524">
    <property type="term" value="F:ATP binding"/>
    <property type="evidence" value="ECO:0007669"/>
    <property type="project" value="TreeGrafter"/>
</dbReference>
<dbReference type="GO" id="GO:0030234">
    <property type="term" value="F:enzyme regulator activity"/>
    <property type="evidence" value="ECO:0007669"/>
    <property type="project" value="InterPro"/>
</dbReference>
<dbReference type="GO" id="GO:0006808">
    <property type="term" value="P:regulation of nitrogen utilization"/>
    <property type="evidence" value="ECO:0007669"/>
    <property type="project" value="InterPro"/>
</dbReference>
<dbReference type="FunFam" id="3.30.70.120:FF:000001">
    <property type="entry name" value="Nitrogen regulatory protein P-II"/>
    <property type="match status" value="1"/>
</dbReference>
<dbReference type="Gene3D" id="3.30.70.120">
    <property type="match status" value="1"/>
</dbReference>
<dbReference type="InterPro" id="IPR002187">
    <property type="entry name" value="N-reg_PII"/>
</dbReference>
<dbReference type="InterPro" id="IPR011322">
    <property type="entry name" value="N-reg_PII-like_a/b"/>
</dbReference>
<dbReference type="InterPro" id="IPR015867">
    <property type="entry name" value="N-reg_PII/ATP_PRibTrfase_C"/>
</dbReference>
<dbReference type="InterPro" id="IPR017918">
    <property type="entry name" value="N-reg_PII_CS"/>
</dbReference>
<dbReference type="InterPro" id="IPR002332">
    <property type="entry name" value="N-reg_PII_urydylation_site"/>
</dbReference>
<dbReference type="PANTHER" id="PTHR30115">
    <property type="entry name" value="NITROGEN REGULATORY PROTEIN P-II"/>
    <property type="match status" value="1"/>
</dbReference>
<dbReference type="PANTHER" id="PTHR30115:SF11">
    <property type="entry name" value="NITROGEN REGULATORY PROTEIN P-II HOMOLOG"/>
    <property type="match status" value="1"/>
</dbReference>
<dbReference type="Pfam" id="PF00543">
    <property type="entry name" value="P-II"/>
    <property type="match status" value="1"/>
</dbReference>
<dbReference type="PIRSF" id="PIRSF039144">
    <property type="entry name" value="GlnB"/>
    <property type="match status" value="1"/>
</dbReference>
<dbReference type="PRINTS" id="PR00340">
    <property type="entry name" value="PIIGLNB"/>
</dbReference>
<dbReference type="SMART" id="SM00938">
    <property type="entry name" value="P-II"/>
    <property type="match status" value="1"/>
</dbReference>
<dbReference type="SUPFAM" id="SSF54913">
    <property type="entry name" value="GlnB-like"/>
    <property type="match status" value="1"/>
</dbReference>
<dbReference type="PROSITE" id="PS00638">
    <property type="entry name" value="PII_GLNB_CTER"/>
    <property type="match status" value="1"/>
</dbReference>
<dbReference type="PROSITE" id="PS51343">
    <property type="entry name" value="PII_GLNB_DOM"/>
    <property type="match status" value="1"/>
</dbReference>
<dbReference type="PROSITE" id="PS00496">
    <property type="entry name" value="PII_GLNB_UMP"/>
    <property type="match status" value="1"/>
</dbReference>
<proteinExistence type="inferred from homology"/>
<name>GLNB_NOSP7</name>
<evidence type="ECO:0000250" key="1"/>
<evidence type="ECO:0000255" key="2">
    <source>
        <dbReference type="PROSITE-ProRule" id="PRU00675"/>
    </source>
</evidence>
<evidence type="ECO:0000305" key="3"/>
<gene>
    <name type="primary">glnB</name>
    <name type="ordered locus">Npun_F4466</name>
</gene>
<reference key="1">
    <citation type="journal article" date="1998" name="Microbiology">
        <title>Characterization of the glnB gene product of Nostoc punctiforme strain ATCC 29133: glnB or the PII protein may be essential.</title>
        <authorList>
            <person name="Hanson T.E."/>
            <person name="Forchhammer K."/>
            <person name="Tandeau de Marsac N."/>
            <person name="Meeks J.C."/>
        </authorList>
    </citation>
    <scope>NUCLEOTIDE SEQUENCE [GENOMIC DNA]</scope>
</reference>
<reference key="2">
    <citation type="journal article" date="2013" name="Plant Physiol.">
        <title>A Nostoc punctiforme Sugar Transporter Necessary to Establish a Cyanobacterium-Plant Symbiosis.</title>
        <authorList>
            <person name="Ekman M."/>
            <person name="Picossi S."/>
            <person name="Campbell E.L."/>
            <person name="Meeks J.C."/>
            <person name="Flores E."/>
        </authorList>
    </citation>
    <scope>NUCLEOTIDE SEQUENCE [LARGE SCALE GENOMIC DNA]</scope>
    <source>
        <strain>ATCC 29133 / PCC 73102</strain>
    </source>
</reference>
<organism>
    <name type="scientific">Nostoc punctiforme (strain ATCC 29133 / PCC 73102)</name>
    <dbReference type="NCBI Taxonomy" id="63737"/>
    <lineage>
        <taxon>Bacteria</taxon>
        <taxon>Bacillati</taxon>
        <taxon>Cyanobacteriota</taxon>
        <taxon>Cyanophyceae</taxon>
        <taxon>Nostocales</taxon>
        <taxon>Nostocaceae</taxon>
        <taxon>Nostoc</taxon>
    </lineage>
</organism>
<accession>O30794</accession>
<accession>B2IUQ8</accession>
<feature type="chain" id="PRO_0000139797" description="Nitrogen regulatory protein P-II">
    <location>
        <begin position="1"/>
        <end position="112"/>
    </location>
</feature>
<feature type="modified residue" description="Phosphoserine" evidence="3">
    <location>
        <position position="49"/>
    </location>
</feature>
<feature type="modified residue" description="O-UMP-tyrosine" evidence="2">
    <location>
        <position position="51"/>
    </location>
</feature>
<keyword id="KW-0547">Nucleotide-binding</keyword>
<keyword id="KW-0597">Phosphoprotein</keyword>
<keyword id="KW-1185">Reference proteome</keyword>
<keyword id="KW-0804">Transcription</keyword>
<keyword id="KW-0805">Transcription regulation</keyword>
<comment type="function">
    <text evidence="1">P-II indirectly controls the transcription of the GS gene (glnA). P-II prevents NR-II-catalyzed conversion of NR-I to NR-I-phosphate, the transcriptional activator of glnA. When P-II is phosphorylated, these events are reversed. In nitrogen-limiting conditions, when the ratio of Gln to 2-ketoglutarate decreases, P-II is phosphorylated which allows the deadenylation of glutamine synthetase (GS), thus activating the enzyme (By similarity).</text>
</comment>
<comment type="subunit">
    <text evidence="1">Homotrimer.</text>
</comment>
<comment type="PTM">
    <text evidence="1">Phosphorylation dependent on the nitrogen source and spectral light quality.</text>
</comment>
<comment type="similarity">
    <text evidence="2">Belongs to the P(II) protein family.</text>
</comment>
<sequence length="112" mass="12479">MKKVEAIIRPFKLDEVKIALVNAGIVGMTVSEVRGFGRQKGQTERYRGSEYTVEFLQKLKVEIVVDDNQVDMVVDKIIAAARTGEIGDGKIFISPVEQVIRIRTGEKNTEAV</sequence>